<protein>
    <recommendedName>
        <fullName evidence="1">Endonuclease V</fullName>
        <ecNumber evidence="1">3.1.21.7</ecNumber>
    </recommendedName>
    <alternativeName>
        <fullName evidence="1">Deoxyinosine 3'endonuclease</fullName>
    </alternativeName>
    <alternativeName>
        <fullName evidence="1">Deoxyribonuclease V</fullName>
        <shortName evidence="1">DNase V</shortName>
    </alternativeName>
</protein>
<organism>
    <name type="scientific">Dehalococcoides mccartyi (strain ATCC BAA-2100 / JCM 16839 / KCTC 5957 / BAV1)</name>
    <dbReference type="NCBI Taxonomy" id="216389"/>
    <lineage>
        <taxon>Bacteria</taxon>
        <taxon>Bacillati</taxon>
        <taxon>Chloroflexota</taxon>
        <taxon>Dehalococcoidia</taxon>
        <taxon>Dehalococcoidales</taxon>
        <taxon>Dehalococcoidaceae</taxon>
        <taxon>Dehalococcoides</taxon>
    </lineage>
</organism>
<reference key="1">
    <citation type="submission" date="2007-05" db="EMBL/GenBank/DDBJ databases">
        <title>Complete sequence of Dehalococcoides sp. BAV1.</title>
        <authorList>
            <consortium name="US DOE Joint Genome Institute"/>
            <person name="Copeland A."/>
            <person name="Lucas S."/>
            <person name="Lapidus A."/>
            <person name="Barry K."/>
            <person name="Detter J.C."/>
            <person name="Glavina del Rio T."/>
            <person name="Hammon N."/>
            <person name="Israni S."/>
            <person name="Pitluck S."/>
            <person name="Lowry S."/>
            <person name="Clum A."/>
            <person name="Schmutz J."/>
            <person name="Larimer F."/>
            <person name="Land M."/>
            <person name="Hauser L."/>
            <person name="Kyrpides N."/>
            <person name="Kim E."/>
            <person name="Ritalahti K.M."/>
            <person name="Loeffler F."/>
            <person name="Richardson P."/>
        </authorList>
    </citation>
    <scope>NUCLEOTIDE SEQUENCE [LARGE SCALE GENOMIC DNA]</scope>
    <source>
        <strain>ATCC BAA-2100 / JCM 16839 / KCTC 5957 / BAV1</strain>
    </source>
</reference>
<proteinExistence type="inferred from homology"/>
<keyword id="KW-0963">Cytoplasm</keyword>
<keyword id="KW-0227">DNA damage</keyword>
<keyword id="KW-0234">DNA repair</keyword>
<keyword id="KW-0255">Endonuclease</keyword>
<keyword id="KW-0378">Hydrolase</keyword>
<keyword id="KW-0460">Magnesium</keyword>
<keyword id="KW-0479">Metal-binding</keyword>
<keyword id="KW-0540">Nuclease</keyword>
<comment type="function">
    <text evidence="1">DNA repair enzyme involved in the repair of deaminated bases. Selectively cleaves double-stranded DNA at the second phosphodiester bond 3' to a deoxyinosine leaving behind the intact lesion on the nicked DNA.</text>
</comment>
<comment type="catalytic activity">
    <reaction evidence="1">
        <text>Endonucleolytic cleavage at apurinic or apyrimidinic sites to products with a 5'-phosphate.</text>
        <dbReference type="EC" id="3.1.21.7"/>
    </reaction>
</comment>
<comment type="cofactor">
    <cofactor evidence="1">
        <name>Mg(2+)</name>
        <dbReference type="ChEBI" id="CHEBI:18420"/>
    </cofactor>
</comment>
<comment type="subcellular location">
    <subcellularLocation>
        <location evidence="1">Cytoplasm</location>
    </subcellularLocation>
</comment>
<comment type="similarity">
    <text evidence="1">Belongs to the endonuclease V family.</text>
</comment>
<dbReference type="EC" id="3.1.21.7" evidence="1"/>
<dbReference type="EMBL" id="CP000688">
    <property type="protein sequence ID" value="ABQ17128.1"/>
    <property type="molecule type" value="Genomic_DNA"/>
</dbReference>
<dbReference type="SMR" id="A5FRP8"/>
<dbReference type="KEGG" id="deb:DehaBAV1_0543"/>
<dbReference type="PATRIC" id="fig|216389.18.peg.588"/>
<dbReference type="HOGENOM" id="CLU_047631_1_1_0"/>
<dbReference type="GO" id="GO:0005737">
    <property type="term" value="C:cytoplasm"/>
    <property type="evidence" value="ECO:0007669"/>
    <property type="project" value="UniProtKB-SubCell"/>
</dbReference>
<dbReference type="GO" id="GO:0043737">
    <property type="term" value="F:deoxyribonuclease V activity"/>
    <property type="evidence" value="ECO:0007669"/>
    <property type="project" value="UniProtKB-UniRule"/>
</dbReference>
<dbReference type="GO" id="GO:0000287">
    <property type="term" value="F:magnesium ion binding"/>
    <property type="evidence" value="ECO:0007669"/>
    <property type="project" value="UniProtKB-UniRule"/>
</dbReference>
<dbReference type="GO" id="GO:0016891">
    <property type="term" value="F:RNA endonuclease activity, producing 5'-phosphomonoesters"/>
    <property type="evidence" value="ECO:0007669"/>
    <property type="project" value="TreeGrafter"/>
</dbReference>
<dbReference type="GO" id="GO:0003727">
    <property type="term" value="F:single-stranded RNA binding"/>
    <property type="evidence" value="ECO:0007669"/>
    <property type="project" value="TreeGrafter"/>
</dbReference>
<dbReference type="GO" id="GO:0006281">
    <property type="term" value="P:DNA repair"/>
    <property type="evidence" value="ECO:0007669"/>
    <property type="project" value="UniProtKB-UniRule"/>
</dbReference>
<dbReference type="CDD" id="cd06559">
    <property type="entry name" value="Endonuclease_V"/>
    <property type="match status" value="1"/>
</dbReference>
<dbReference type="Gene3D" id="3.30.2170.10">
    <property type="entry name" value="archaeoglobus fulgidus dsm 4304 superfamily"/>
    <property type="match status" value="1"/>
</dbReference>
<dbReference type="HAMAP" id="MF_00801">
    <property type="entry name" value="Endonuclease_5"/>
    <property type="match status" value="1"/>
</dbReference>
<dbReference type="InterPro" id="IPR007581">
    <property type="entry name" value="Endonuclease-V"/>
</dbReference>
<dbReference type="NCBIfam" id="NF008629">
    <property type="entry name" value="PRK11617.1"/>
    <property type="match status" value="1"/>
</dbReference>
<dbReference type="PANTHER" id="PTHR28511">
    <property type="entry name" value="ENDONUCLEASE V"/>
    <property type="match status" value="1"/>
</dbReference>
<dbReference type="PANTHER" id="PTHR28511:SF1">
    <property type="entry name" value="ENDONUCLEASE V"/>
    <property type="match status" value="1"/>
</dbReference>
<dbReference type="Pfam" id="PF04493">
    <property type="entry name" value="Endonuclease_5"/>
    <property type="match status" value="1"/>
</dbReference>
<name>NFI_DEHMB</name>
<gene>
    <name evidence="1" type="primary">nfi</name>
    <name type="ordered locus">DehaBAV1_0543</name>
</gene>
<sequence length="223" mass="24396">MNVKIKKLHNWDMTPTEAILLQRELAQKVSACGTLSSISLVAGADVWHSRTSGMGRAAVVVLSYPDMNLVEVSRSEGDCHIPYIPGLLSFREMPLLLSAFEGLESMPDLILMDGQGLAHPRRLGIASHLGLFLNKPVIGCAKSRLVGEYTPLADEAGSYSDLYHNSQLVGRVLRTRRGVNPLFISVGHKICLEEACSRVADCCRGYRLPEPLRHAHLAAAELI</sequence>
<accession>A5FRP8</accession>
<evidence type="ECO:0000255" key="1">
    <source>
        <dbReference type="HAMAP-Rule" id="MF_00801"/>
    </source>
</evidence>
<feature type="chain" id="PRO_1000212971" description="Endonuclease V">
    <location>
        <begin position="1"/>
        <end position="223"/>
    </location>
</feature>
<feature type="binding site" evidence="1">
    <location>
        <position position="45"/>
    </location>
    <ligand>
        <name>Mg(2+)</name>
        <dbReference type="ChEBI" id="CHEBI:18420"/>
    </ligand>
</feature>
<feature type="binding site" evidence="1">
    <location>
        <position position="113"/>
    </location>
    <ligand>
        <name>Mg(2+)</name>
        <dbReference type="ChEBI" id="CHEBI:18420"/>
    </ligand>
</feature>
<feature type="site" description="Interaction with target DNA" evidence="1">
    <location>
        <position position="83"/>
    </location>
</feature>